<accession>A5D2N5</accession>
<name>RNY_PELTS</name>
<dbReference type="EC" id="3.1.-.-" evidence="1"/>
<dbReference type="EMBL" id="AP009389">
    <property type="protein sequence ID" value="BAF59483.1"/>
    <property type="molecule type" value="Genomic_DNA"/>
</dbReference>
<dbReference type="SMR" id="A5D2N5"/>
<dbReference type="STRING" id="370438.PTH_1302"/>
<dbReference type="KEGG" id="pth:PTH_1302"/>
<dbReference type="eggNOG" id="COG1418">
    <property type="taxonomic scope" value="Bacteria"/>
</dbReference>
<dbReference type="HOGENOM" id="CLU_028328_0_0_9"/>
<dbReference type="Proteomes" id="UP000006556">
    <property type="component" value="Chromosome"/>
</dbReference>
<dbReference type="GO" id="GO:0005886">
    <property type="term" value="C:plasma membrane"/>
    <property type="evidence" value="ECO:0007669"/>
    <property type="project" value="UniProtKB-UniRule"/>
</dbReference>
<dbReference type="GO" id="GO:0003723">
    <property type="term" value="F:RNA binding"/>
    <property type="evidence" value="ECO:0007669"/>
    <property type="project" value="UniProtKB-UniRule"/>
</dbReference>
<dbReference type="GO" id="GO:0004521">
    <property type="term" value="F:RNA endonuclease activity"/>
    <property type="evidence" value="ECO:0007669"/>
    <property type="project" value="UniProtKB-UniRule"/>
</dbReference>
<dbReference type="GO" id="GO:0006402">
    <property type="term" value="P:mRNA catabolic process"/>
    <property type="evidence" value="ECO:0007669"/>
    <property type="project" value="UniProtKB-UniRule"/>
</dbReference>
<dbReference type="CDD" id="cd00077">
    <property type="entry name" value="HDc"/>
    <property type="match status" value="1"/>
</dbReference>
<dbReference type="CDD" id="cd22431">
    <property type="entry name" value="KH-I_RNaseY"/>
    <property type="match status" value="1"/>
</dbReference>
<dbReference type="FunFam" id="1.10.3210.10:FF:000003">
    <property type="entry name" value="Ribonuclease Y"/>
    <property type="match status" value="1"/>
</dbReference>
<dbReference type="FunFam" id="3.30.1370.10:FF:000006">
    <property type="entry name" value="Ribonuclease Y"/>
    <property type="match status" value="1"/>
</dbReference>
<dbReference type="Gene3D" id="1.10.3210.10">
    <property type="entry name" value="Hypothetical protein af1432"/>
    <property type="match status" value="1"/>
</dbReference>
<dbReference type="Gene3D" id="3.30.1370.10">
    <property type="entry name" value="K Homology domain, type 1"/>
    <property type="match status" value="1"/>
</dbReference>
<dbReference type="HAMAP" id="MF_00335">
    <property type="entry name" value="RNase_Y"/>
    <property type="match status" value="1"/>
</dbReference>
<dbReference type="InterPro" id="IPR003607">
    <property type="entry name" value="HD/PDEase_dom"/>
</dbReference>
<dbReference type="InterPro" id="IPR006674">
    <property type="entry name" value="HD_domain"/>
</dbReference>
<dbReference type="InterPro" id="IPR006675">
    <property type="entry name" value="HDIG_dom"/>
</dbReference>
<dbReference type="InterPro" id="IPR004087">
    <property type="entry name" value="KH_dom"/>
</dbReference>
<dbReference type="InterPro" id="IPR004088">
    <property type="entry name" value="KH_dom_type_1"/>
</dbReference>
<dbReference type="InterPro" id="IPR036612">
    <property type="entry name" value="KH_dom_type_1_sf"/>
</dbReference>
<dbReference type="InterPro" id="IPR017705">
    <property type="entry name" value="Ribonuclease_Y"/>
</dbReference>
<dbReference type="InterPro" id="IPR022711">
    <property type="entry name" value="RNase_Y_N"/>
</dbReference>
<dbReference type="NCBIfam" id="TIGR00277">
    <property type="entry name" value="HDIG"/>
    <property type="match status" value="1"/>
</dbReference>
<dbReference type="NCBIfam" id="TIGR03319">
    <property type="entry name" value="RNase_Y"/>
    <property type="match status" value="1"/>
</dbReference>
<dbReference type="PANTHER" id="PTHR12826">
    <property type="entry name" value="RIBONUCLEASE Y"/>
    <property type="match status" value="1"/>
</dbReference>
<dbReference type="PANTHER" id="PTHR12826:SF15">
    <property type="entry name" value="RIBONUCLEASE Y"/>
    <property type="match status" value="1"/>
</dbReference>
<dbReference type="Pfam" id="PF01966">
    <property type="entry name" value="HD"/>
    <property type="match status" value="1"/>
</dbReference>
<dbReference type="Pfam" id="PF00013">
    <property type="entry name" value="KH_1"/>
    <property type="match status" value="1"/>
</dbReference>
<dbReference type="Pfam" id="PF12072">
    <property type="entry name" value="RNase_Y_N"/>
    <property type="match status" value="1"/>
</dbReference>
<dbReference type="SMART" id="SM00471">
    <property type="entry name" value="HDc"/>
    <property type="match status" value="1"/>
</dbReference>
<dbReference type="SMART" id="SM00322">
    <property type="entry name" value="KH"/>
    <property type="match status" value="1"/>
</dbReference>
<dbReference type="SUPFAM" id="SSF54791">
    <property type="entry name" value="Eukaryotic type KH-domain (KH-domain type I)"/>
    <property type="match status" value="1"/>
</dbReference>
<dbReference type="SUPFAM" id="SSF109604">
    <property type="entry name" value="HD-domain/PDEase-like"/>
    <property type="match status" value="1"/>
</dbReference>
<dbReference type="PROSITE" id="PS51831">
    <property type="entry name" value="HD"/>
    <property type="match status" value="1"/>
</dbReference>
<dbReference type="PROSITE" id="PS50084">
    <property type="entry name" value="KH_TYPE_1"/>
    <property type="match status" value="1"/>
</dbReference>
<protein>
    <recommendedName>
        <fullName evidence="1">Ribonuclease Y</fullName>
        <shortName evidence="1">RNase Y</shortName>
        <ecNumber evidence="1">3.1.-.-</ecNumber>
    </recommendedName>
</protein>
<feature type="chain" id="PRO_0000344921" description="Ribonuclease Y">
    <location>
        <begin position="1"/>
        <end position="498"/>
    </location>
</feature>
<feature type="domain" description="KH" evidence="1">
    <location>
        <begin position="188"/>
        <end position="273"/>
    </location>
</feature>
<feature type="domain" description="HD" evidence="2">
    <location>
        <begin position="314"/>
        <end position="407"/>
    </location>
</feature>
<comment type="function">
    <text evidence="1">Endoribonuclease that initiates mRNA decay.</text>
</comment>
<comment type="similarity">
    <text evidence="1">Belongs to the RNase Y family.</text>
</comment>
<reference key="1">
    <citation type="journal article" date="2008" name="Genome Res.">
        <title>The genome of Pelotomaculum thermopropionicum reveals niche-associated evolution in anaerobic microbiota.</title>
        <authorList>
            <person name="Kosaka T."/>
            <person name="Kato S."/>
            <person name="Shimoyama T."/>
            <person name="Ishii S."/>
            <person name="Abe T."/>
            <person name="Watanabe K."/>
        </authorList>
    </citation>
    <scope>NUCLEOTIDE SEQUENCE [LARGE SCALE GENOMIC DNA]</scope>
    <source>
        <strain>DSM 13744 / JCM 10971 / SI</strain>
    </source>
</reference>
<organism>
    <name type="scientific">Pelotomaculum thermopropionicum (strain DSM 13744 / JCM 10971 / SI)</name>
    <dbReference type="NCBI Taxonomy" id="370438"/>
    <lineage>
        <taxon>Bacteria</taxon>
        <taxon>Bacillati</taxon>
        <taxon>Bacillota</taxon>
        <taxon>Clostridia</taxon>
        <taxon>Eubacteriales</taxon>
        <taxon>Desulfotomaculaceae</taxon>
        <taxon>Pelotomaculum</taxon>
    </lineage>
</organism>
<proteinExistence type="inferred from homology"/>
<gene>
    <name evidence="1" type="primary">rny</name>
    <name type="ordered locus">PTH_1302</name>
</gene>
<evidence type="ECO:0000255" key="1">
    <source>
        <dbReference type="HAMAP-Rule" id="MF_00335"/>
    </source>
</evidence>
<evidence type="ECO:0000255" key="2">
    <source>
        <dbReference type="PROSITE-ProRule" id="PRU01175"/>
    </source>
</evidence>
<keyword id="KW-0255">Endonuclease</keyword>
<keyword id="KW-0378">Hydrolase</keyword>
<keyword id="KW-0540">Nuclease</keyword>
<keyword id="KW-1185">Reference proteome</keyword>
<keyword id="KW-0694">RNA-binding</keyword>
<sequence length="498" mass="56041">MAFCAGYFLRKYLAEAKIASAEAQAKKILEEAEKEAEAKKREAILEAKEEVLKLRNDMERENRERRLELQRLERRLVQKEETLDRKVDAIEKKEDALNRKEAEIDAIKAQLNEIYKKQLSELERISGMTSEEAKQALLSDIEKEIQHEAAMLIKEIESKAREEGEKRARDIISLAIQRCAADHVAEATVSVIPLPSDEMKGRIIGREGRNIRAFETLTGIDLIIDDTPEAVILSGFDPIRREVARIALEKLIVDGRIHPARIEEMVEKAQKEVNVQIRDAGEQAVFETGVHGLHPELVTLLGRLKFRTSYGQNVLKHSIEVAHLAGLMASEIGVDIQMAKRAGLLHDIGKAVDHEVEGPHVAIGIDLAKKYREAQEIIHAIAAHHGDEEPKSIIAVLVQAADAISAARPGARRETLEAYIKRLTKLEEIANSFDGVEKSYAIQAGREVRIMVKPEKIDDLGAIRLVREITKKIENELDYPGQIKVVIIRETRVVEYAK</sequence>